<keyword id="KW-1003">Cell membrane</keyword>
<keyword id="KW-0472">Membrane</keyword>
<keyword id="KW-0812">Transmembrane</keyword>
<keyword id="KW-1133">Transmembrane helix</keyword>
<dbReference type="EMBL" id="AE001439">
    <property type="protein sequence ID" value="AAD05759.1"/>
    <property type="molecule type" value="Genomic_DNA"/>
</dbReference>
<dbReference type="PIR" id="D71963">
    <property type="entry name" value="D71963"/>
</dbReference>
<dbReference type="RefSeq" id="WP_000890449.1">
    <property type="nucleotide sequence ID" value="NZ_CP011330.1"/>
</dbReference>
<dbReference type="SMR" id="Q9ZMP3"/>
<dbReference type="KEGG" id="hpj:jhp_0175"/>
<dbReference type="PATRIC" id="fig|85963.30.peg.846"/>
<dbReference type="eggNOG" id="COG2862">
    <property type="taxonomic scope" value="Bacteria"/>
</dbReference>
<dbReference type="Proteomes" id="UP000000804">
    <property type="component" value="Chromosome"/>
</dbReference>
<dbReference type="GO" id="GO:0005886">
    <property type="term" value="C:plasma membrane"/>
    <property type="evidence" value="ECO:0007669"/>
    <property type="project" value="UniProtKB-SubCell"/>
</dbReference>
<dbReference type="HAMAP" id="MF_00143">
    <property type="entry name" value="UPF0114"/>
    <property type="match status" value="1"/>
</dbReference>
<dbReference type="InterPro" id="IPR005134">
    <property type="entry name" value="UPF0114"/>
</dbReference>
<dbReference type="InterPro" id="IPR020761">
    <property type="entry name" value="UPF0114_bac"/>
</dbReference>
<dbReference type="NCBIfam" id="TIGR00645">
    <property type="entry name" value="HI0507"/>
    <property type="match status" value="1"/>
</dbReference>
<dbReference type="PANTHER" id="PTHR38596">
    <property type="entry name" value="UPF0114 PROTEIN YQHA"/>
    <property type="match status" value="1"/>
</dbReference>
<dbReference type="PANTHER" id="PTHR38596:SF1">
    <property type="entry name" value="UPF0114 PROTEIN YQHA"/>
    <property type="match status" value="1"/>
</dbReference>
<dbReference type="Pfam" id="PF03350">
    <property type="entry name" value="UPF0114"/>
    <property type="match status" value="1"/>
</dbReference>
<accession>Q9ZMP3</accession>
<proteinExistence type="inferred from homology"/>
<organism>
    <name type="scientific">Helicobacter pylori (strain J99 / ATCC 700824)</name>
    <name type="common">Campylobacter pylori J99</name>
    <dbReference type="NCBI Taxonomy" id="85963"/>
    <lineage>
        <taxon>Bacteria</taxon>
        <taxon>Pseudomonadati</taxon>
        <taxon>Campylobacterota</taxon>
        <taxon>Epsilonproteobacteria</taxon>
        <taxon>Campylobacterales</taxon>
        <taxon>Helicobacteraceae</taxon>
        <taxon>Helicobacter</taxon>
    </lineage>
</organism>
<sequence>MLEKLIERVLFATRWLLAPLCIAMSLVLVVLGYVFMKELWHMLSHLDTISETDLVLSALGLVDLLFMAGLVLMVLLASYESFVSKLDKVDASEITWLKHTDFNALKLKVSLSIVAISAIFLLKRYMSLEDVLSSIPKDTPLSHNPIFWQVVIHLVFVCSALLTAVTNNIAFSQKERH</sequence>
<gene>
    <name type="ordered locus">jhp_0175</name>
</gene>
<name>Y189_HELPJ</name>
<protein>
    <recommendedName>
        <fullName>UPF0114 protein jhp_0175</fullName>
    </recommendedName>
</protein>
<evidence type="ECO:0000255" key="1"/>
<evidence type="ECO:0000305" key="2"/>
<feature type="chain" id="PRO_0000214372" description="UPF0114 protein jhp_0175">
    <location>
        <begin position="1"/>
        <end position="177"/>
    </location>
</feature>
<feature type="transmembrane region" description="Helical" evidence="1">
    <location>
        <begin position="15"/>
        <end position="35"/>
    </location>
</feature>
<feature type="transmembrane region" description="Helical" evidence="1">
    <location>
        <begin position="54"/>
        <end position="74"/>
    </location>
</feature>
<feature type="transmembrane region" description="Helical" evidence="1">
    <location>
        <begin position="145"/>
        <end position="165"/>
    </location>
</feature>
<reference key="1">
    <citation type="journal article" date="1999" name="Nature">
        <title>Genomic sequence comparison of two unrelated isolates of the human gastric pathogen Helicobacter pylori.</title>
        <authorList>
            <person name="Alm R.A."/>
            <person name="Ling L.-S.L."/>
            <person name="Moir D.T."/>
            <person name="King B.L."/>
            <person name="Brown E.D."/>
            <person name="Doig P.C."/>
            <person name="Smith D.R."/>
            <person name="Noonan B."/>
            <person name="Guild B.C."/>
            <person name="deJonge B.L."/>
            <person name="Carmel G."/>
            <person name="Tummino P.J."/>
            <person name="Caruso A."/>
            <person name="Uria-Nickelsen M."/>
            <person name="Mills D.M."/>
            <person name="Ives C."/>
            <person name="Gibson R."/>
            <person name="Merberg D."/>
            <person name="Mills S.D."/>
            <person name="Jiang Q."/>
            <person name="Taylor D.E."/>
            <person name="Vovis G.F."/>
            <person name="Trust T.J."/>
        </authorList>
    </citation>
    <scope>NUCLEOTIDE SEQUENCE [LARGE SCALE GENOMIC DNA]</scope>
    <source>
        <strain>J99 / ATCC 700824</strain>
    </source>
</reference>
<comment type="subcellular location">
    <subcellularLocation>
        <location evidence="2">Cell membrane</location>
        <topology evidence="2">Multi-pass membrane protein</topology>
    </subcellularLocation>
</comment>
<comment type="similarity">
    <text evidence="2">Belongs to the UPF0114 family.</text>
</comment>